<protein>
    <recommendedName>
        <fullName evidence="1">Potassium-transporting ATPase KdpC subunit</fullName>
    </recommendedName>
    <alternativeName>
        <fullName evidence="1">ATP phosphohydrolase [potassium-transporting] C chain</fullName>
    </alternativeName>
    <alternativeName>
        <fullName evidence="1">Potassium-binding and translocating subunit C</fullName>
    </alternativeName>
    <alternativeName>
        <fullName evidence="1">Potassium-translocating ATPase C chain</fullName>
    </alternativeName>
</protein>
<dbReference type="EMBL" id="CP000139">
    <property type="protein sequence ID" value="ABR40894.1"/>
    <property type="molecule type" value="Genomic_DNA"/>
</dbReference>
<dbReference type="RefSeq" id="WP_012055618.1">
    <property type="nucleotide sequence ID" value="NC_009614.1"/>
</dbReference>
<dbReference type="SMR" id="A6L5D0"/>
<dbReference type="STRING" id="435590.BVU_3265"/>
<dbReference type="PaxDb" id="435590-BVU_3265"/>
<dbReference type="GeneID" id="5304226"/>
<dbReference type="KEGG" id="bvu:BVU_3265"/>
<dbReference type="PATRIC" id="fig|435590.9.peg.3362"/>
<dbReference type="eggNOG" id="COG2156">
    <property type="taxonomic scope" value="Bacteria"/>
</dbReference>
<dbReference type="HOGENOM" id="CLU_077094_2_0_10"/>
<dbReference type="BioCyc" id="BVUL435590:G1G59-3386-MONOMER"/>
<dbReference type="Proteomes" id="UP000002861">
    <property type="component" value="Chromosome"/>
</dbReference>
<dbReference type="GO" id="GO:0005886">
    <property type="term" value="C:plasma membrane"/>
    <property type="evidence" value="ECO:0007669"/>
    <property type="project" value="UniProtKB-SubCell"/>
</dbReference>
<dbReference type="GO" id="GO:0005524">
    <property type="term" value="F:ATP binding"/>
    <property type="evidence" value="ECO:0007669"/>
    <property type="project" value="UniProtKB-UniRule"/>
</dbReference>
<dbReference type="GO" id="GO:0008556">
    <property type="term" value="F:P-type potassium transmembrane transporter activity"/>
    <property type="evidence" value="ECO:0007669"/>
    <property type="project" value="InterPro"/>
</dbReference>
<dbReference type="HAMAP" id="MF_00276">
    <property type="entry name" value="KdpC"/>
    <property type="match status" value="1"/>
</dbReference>
<dbReference type="InterPro" id="IPR003820">
    <property type="entry name" value="KdpC"/>
</dbReference>
<dbReference type="NCBIfam" id="TIGR00681">
    <property type="entry name" value="kdpC"/>
    <property type="match status" value="1"/>
</dbReference>
<dbReference type="NCBIfam" id="NF001454">
    <property type="entry name" value="PRK00315.1"/>
    <property type="match status" value="1"/>
</dbReference>
<dbReference type="NCBIfam" id="NF010606">
    <property type="entry name" value="PRK14002.1"/>
    <property type="match status" value="1"/>
</dbReference>
<dbReference type="PANTHER" id="PTHR30042">
    <property type="entry name" value="POTASSIUM-TRANSPORTING ATPASE C CHAIN"/>
    <property type="match status" value="1"/>
</dbReference>
<dbReference type="PANTHER" id="PTHR30042:SF2">
    <property type="entry name" value="POTASSIUM-TRANSPORTING ATPASE KDPC SUBUNIT"/>
    <property type="match status" value="1"/>
</dbReference>
<dbReference type="Pfam" id="PF02669">
    <property type="entry name" value="KdpC"/>
    <property type="match status" value="1"/>
</dbReference>
<dbReference type="PIRSF" id="PIRSF001296">
    <property type="entry name" value="K_ATPase_KdpC"/>
    <property type="match status" value="1"/>
</dbReference>
<sequence>MKNFIKSFRLTLVFCVFFSVCYILVLWIFAQFAGPNSGNAEVVELNGKVVGAANVGQSFTEDIYFWGRPSCAGDGYDATSSAGSNKGPTNAEYLAEVEARIDTFLKHHPYLSRKEVPAEMVTASGSGLDPDITPDCAYVQVQRVAKARGMSEETVKAIVDKAVEKPFMGIFGTEKVNVLKLNAALEKAK</sequence>
<accession>A6L5D0</accession>
<comment type="function">
    <text evidence="1">Part of the high-affinity ATP-driven potassium transport (or Kdp) system, which catalyzes the hydrolysis of ATP coupled with the electrogenic transport of potassium into the cytoplasm. This subunit acts as a catalytic chaperone that increases the ATP-binding affinity of the ATP-hydrolyzing subunit KdpB by the formation of a transient KdpB/KdpC/ATP ternary complex.</text>
</comment>
<comment type="subunit">
    <text evidence="1">The system is composed of three essential subunits: KdpA, KdpB and KdpC.</text>
</comment>
<comment type="subcellular location">
    <subcellularLocation>
        <location evidence="1">Cell inner membrane</location>
        <topology evidence="1">Single-pass membrane protein</topology>
    </subcellularLocation>
</comment>
<comment type="similarity">
    <text evidence="1">Belongs to the KdpC family.</text>
</comment>
<name>KDPC_PHOV8</name>
<keyword id="KW-0067">ATP-binding</keyword>
<keyword id="KW-0997">Cell inner membrane</keyword>
<keyword id="KW-1003">Cell membrane</keyword>
<keyword id="KW-0406">Ion transport</keyword>
<keyword id="KW-0472">Membrane</keyword>
<keyword id="KW-0547">Nucleotide-binding</keyword>
<keyword id="KW-0630">Potassium</keyword>
<keyword id="KW-0633">Potassium transport</keyword>
<keyword id="KW-0812">Transmembrane</keyword>
<keyword id="KW-1133">Transmembrane helix</keyword>
<keyword id="KW-0813">Transport</keyword>
<organism>
    <name type="scientific">Phocaeicola vulgatus (strain ATCC 8482 / DSM 1447 / JCM 5826 / CCUG 4940 / NBRC 14291 / NCTC 11154)</name>
    <name type="common">Bacteroides vulgatus</name>
    <dbReference type="NCBI Taxonomy" id="435590"/>
    <lineage>
        <taxon>Bacteria</taxon>
        <taxon>Pseudomonadati</taxon>
        <taxon>Bacteroidota</taxon>
        <taxon>Bacteroidia</taxon>
        <taxon>Bacteroidales</taxon>
        <taxon>Bacteroidaceae</taxon>
        <taxon>Phocaeicola</taxon>
    </lineage>
</organism>
<reference key="1">
    <citation type="journal article" date="2007" name="PLoS Biol.">
        <title>Evolution of symbiotic bacteria in the distal human intestine.</title>
        <authorList>
            <person name="Xu J."/>
            <person name="Mahowald M.A."/>
            <person name="Ley R.E."/>
            <person name="Lozupone C.A."/>
            <person name="Hamady M."/>
            <person name="Martens E.C."/>
            <person name="Henrissat B."/>
            <person name="Coutinho P.M."/>
            <person name="Minx P."/>
            <person name="Latreille P."/>
            <person name="Cordum H."/>
            <person name="Van Brunt A."/>
            <person name="Kim K."/>
            <person name="Fulton R.S."/>
            <person name="Fulton L.A."/>
            <person name="Clifton S.W."/>
            <person name="Wilson R.K."/>
            <person name="Knight R.D."/>
            <person name="Gordon J.I."/>
        </authorList>
    </citation>
    <scope>NUCLEOTIDE SEQUENCE [LARGE SCALE GENOMIC DNA]</scope>
    <source>
        <strain>ATCC 8482 / DSM 1447 / JCM 5826 / CCUG 4940 / NBRC 14291 / NCTC 11154</strain>
    </source>
</reference>
<feature type="chain" id="PRO_1000022263" description="Potassium-transporting ATPase KdpC subunit">
    <location>
        <begin position="1"/>
        <end position="189"/>
    </location>
</feature>
<feature type="transmembrane region" description="Helical" evidence="1">
    <location>
        <begin position="10"/>
        <end position="30"/>
    </location>
</feature>
<evidence type="ECO:0000255" key="1">
    <source>
        <dbReference type="HAMAP-Rule" id="MF_00276"/>
    </source>
</evidence>
<proteinExistence type="inferred from homology"/>
<gene>
    <name evidence="1" type="primary">kdpC</name>
    <name type="ordered locus">BVU_3265</name>
</gene>